<name>DUSA_PSESM</name>
<protein>
    <recommendedName>
        <fullName evidence="1">tRNA-dihydrouridine(20/20a) synthase</fullName>
        <ecNumber evidence="1">1.3.1.-</ecNumber>
        <ecNumber evidence="1">1.3.1.91</ecNumber>
    </recommendedName>
    <alternativeName>
        <fullName evidence="1">U20-specific dihydrouridine synthase</fullName>
        <shortName evidence="1">U20-specific Dus</shortName>
    </alternativeName>
    <alternativeName>
        <fullName evidence="1">tRNA-dihydrouridine synthase A</fullName>
    </alternativeName>
</protein>
<comment type="function">
    <text evidence="1">Catalyzes the synthesis of 5,6-dihydrouridine (D), a modified base found in the D-loop of most tRNAs, via the reduction of the C5-C6 double bond in target uridines. Specifically modifies U20 and U20a in tRNAs.</text>
</comment>
<comment type="catalytic activity">
    <reaction evidence="1">
        <text>5,6-dihydrouridine(20) in tRNA + NADP(+) = uridine(20) in tRNA + NADPH + H(+)</text>
        <dbReference type="Rhea" id="RHEA:53336"/>
        <dbReference type="Rhea" id="RHEA-COMP:13533"/>
        <dbReference type="Rhea" id="RHEA-COMP:13534"/>
        <dbReference type="ChEBI" id="CHEBI:15378"/>
        <dbReference type="ChEBI" id="CHEBI:57783"/>
        <dbReference type="ChEBI" id="CHEBI:58349"/>
        <dbReference type="ChEBI" id="CHEBI:65315"/>
        <dbReference type="ChEBI" id="CHEBI:74443"/>
        <dbReference type="EC" id="1.3.1.91"/>
    </reaction>
</comment>
<comment type="catalytic activity">
    <reaction evidence="1">
        <text>5,6-dihydrouridine(20) in tRNA + NAD(+) = uridine(20) in tRNA + NADH + H(+)</text>
        <dbReference type="Rhea" id="RHEA:53340"/>
        <dbReference type="Rhea" id="RHEA-COMP:13533"/>
        <dbReference type="Rhea" id="RHEA-COMP:13534"/>
        <dbReference type="ChEBI" id="CHEBI:15378"/>
        <dbReference type="ChEBI" id="CHEBI:57540"/>
        <dbReference type="ChEBI" id="CHEBI:57945"/>
        <dbReference type="ChEBI" id="CHEBI:65315"/>
        <dbReference type="ChEBI" id="CHEBI:74443"/>
        <dbReference type="EC" id="1.3.1.91"/>
    </reaction>
</comment>
<comment type="catalytic activity">
    <reaction evidence="1">
        <text>5,6-dihydrouridine(20a) in tRNA + NADP(+) = uridine(20a) in tRNA + NADPH + H(+)</text>
        <dbReference type="Rhea" id="RHEA:53344"/>
        <dbReference type="Rhea" id="RHEA-COMP:13535"/>
        <dbReference type="Rhea" id="RHEA-COMP:13536"/>
        <dbReference type="ChEBI" id="CHEBI:15378"/>
        <dbReference type="ChEBI" id="CHEBI:57783"/>
        <dbReference type="ChEBI" id="CHEBI:58349"/>
        <dbReference type="ChEBI" id="CHEBI:65315"/>
        <dbReference type="ChEBI" id="CHEBI:74443"/>
    </reaction>
</comment>
<comment type="catalytic activity">
    <reaction evidence="1">
        <text>5,6-dihydrouridine(20a) in tRNA + NAD(+) = uridine(20a) in tRNA + NADH + H(+)</text>
        <dbReference type="Rhea" id="RHEA:53348"/>
        <dbReference type="Rhea" id="RHEA-COMP:13535"/>
        <dbReference type="Rhea" id="RHEA-COMP:13536"/>
        <dbReference type="ChEBI" id="CHEBI:15378"/>
        <dbReference type="ChEBI" id="CHEBI:57540"/>
        <dbReference type="ChEBI" id="CHEBI:57945"/>
        <dbReference type="ChEBI" id="CHEBI:65315"/>
        <dbReference type="ChEBI" id="CHEBI:74443"/>
    </reaction>
</comment>
<comment type="cofactor">
    <cofactor evidence="1">
        <name>FMN</name>
        <dbReference type="ChEBI" id="CHEBI:58210"/>
    </cofactor>
</comment>
<comment type="similarity">
    <text evidence="1">Belongs to the Dus family. DusA subfamily.</text>
</comment>
<evidence type="ECO:0000255" key="1">
    <source>
        <dbReference type="HAMAP-Rule" id="MF_02041"/>
    </source>
</evidence>
<proteinExistence type="inferred from homology"/>
<feature type="chain" id="PRO_0000162071" description="tRNA-dihydrouridine(20/20a) synthase">
    <location>
        <begin position="1"/>
        <end position="336"/>
    </location>
</feature>
<feature type="active site" description="Proton donor" evidence="1">
    <location>
        <position position="107"/>
    </location>
</feature>
<feature type="binding site" evidence="1">
    <location>
        <begin position="24"/>
        <end position="26"/>
    </location>
    <ligand>
        <name>FMN</name>
        <dbReference type="ChEBI" id="CHEBI:58210"/>
    </ligand>
</feature>
<feature type="binding site" evidence="1">
    <location>
        <position position="77"/>
    </location>
    <ligand>
        <name>FMN</name>
        <dbReference type="ChEBI" id="CHEBI:58210"/>
    </ligand>
</feature>
<feature type="binding site" evidence="1">
    <location>
        <position position="146"/>
    </location>
    <ligand>
        <name>FMN</name>
        <dbReference type="ChEBI" id="CHEBI:58210"/>
    </ligand>
</feature>
<feature type="binding site" evidence="1">
    <location>
        <position position="178"/>
    </location>
    <ligand>
        <name>FMN</name>
        <dbReference type="ChEBI" id="CHEBI:58210"/>
    </ligand>
</feature>
<feature type="binding site" evidence="1">
    <location>
        <begin position="218"/>
        <end position="220"/>
    </location>
    <ligand>
        <name>FMN</name>
        <dbReference type="ChEBI" id="CHEBI:58210"/>
    </ligand>
</feature>
<feature type="binding site" evidence="1">
    <location>
        <begin position="240"/>
        <end position="241"/>
    </location>
    <ligand>
        <name>FMN</name>
        <dbReference type="ChEBI" id="CHEBI:58210"/>
    </ligand>
</feature>
<feature type="site" description="Interacts with tRNA" evidence="1">
    <location>
        <position position="104"/>
    </location>
</feature>
<feature type="site" description="Interacts with tRNA; defines subfamily-specific binding signature" evidence="1">
    <location>
        <position position="190"/>
    </location>
</feature>
<feature type="site" description="Interacts with tRNA" evidence="1">
    <location>
        <position position="193"/>
    </location>
</feature>
<feature type="site" description="Interacts with tRNA; defines subfamily-specific binding signature" evidence="1">
    <location>
        <position position="306"/>
    </location>
</feature>
<feature type="site" description="Interacts with tRNA; defines subfamily-specific binding signature" evidence="1">
    <location>
        <position position="309"/>
    </location>
</feature>
<reference key="1">
    <citation type="journal article" date="2003" name="Proc. Natl. Acad. Sci. U.S.A.">
        <title>The complete genome sequence of the Arabidopsis and tomato pathogen Pseudomonas syringae pv. tomato DC3000.</title>
        <authorList>
            <person name="Buell C.R."/>
            <person name="Joardar V."/>
            <person name="Lindeberg M."/>
            <person name="Selengut J."/>
            <person name="Paulsen I.T."/>
            <person name="Gwinn M.L."/>
            <person name="Dodson R.J."/>
            <person name="DeBoy R.T."/>
            <person name="Durkin A.S."/>
            <person name="Kolonay J.F."/>
            <person name="Madupu R."/>
            <person name="Daugherty S.C."/>
            <person name="Brinkac L.M."/>
            <person name="Beanan M.J."/>
            <person name="Haft D.H."/>
            <person name="Nelson W.C."/>
            <person name="Davidsen T.M."/>
            <person name="Zafar N."/>
            <person name="Zhou L."/>
            <person name="Liu J."/>
            <person name="Yuan Q."/>
            <person name="Khouri H.M."/>
            <person name="Fedorova N.B."/>
            <person name="Tran B."/>
            <person name="Russell D."/>
            <person name="Berry K.J."/>
            <person name="Utterback T.R."/>
            <person name="Van Aken S.E."/>
            <person name="Feldblyum T.V."/>
            <person name="D'Ascenzo M."/>
            <person name="Deng W.-L."/>
            <person name="Ramos A.R."/>
            <person name="Alfano J.R."/>
            <person name="Cartinhour S."/>
            <person name="Chatterjee A.K."/>
            <person name="Delaney T.P."/>
            <person name="Lazarowitz S.G."/>
            <person name="Martin G.B."/>
            <person name="Schneider D.J."/>
            <person name="Tang X."/>
            <person name="Bender C.L."/>
            <person name="White O."/>
            <person name="Fraser C.M."/>
            <person name="Collmer A."/>
        </authorList>
    </citation>
    <scope>NUCLEOTIDE SEQUENCE [LARGE SCALE GENOMIC DNA]</scope>
    <source>
        <strain>ATCC BAA-871 / DC3000</strain>
    </source>
</reference>
<keyword id="KW-0285">Flavoprotein</keyword>
<keyword id="KW-0288">FMN</keyword>
<keyword id="KW-0521">NADP</keyword>
<keyword id="KW-0560">Oxidoreductase</keyword>
<keyword id="KW-1185">Reference proteome</keyword>
<keyword id="KW-0694">RNA-binding</keyword>
<keyword id="KW-0819">tRNA processing</keyword>
<keyword id="KW-0820">tRNA-binding</keyword>
<dbReference type="EC" id="1.3.1.-" evidence="1"/>
<dbReference type="EC" id="1.3.1.91" evidence="1"/>
<dbReference type="EMBL" id="AE016853">
    <property type="protein sequence ID" value="AAO55643.1"/>
    <property type="molecule type" value="Genomic_DNA"/>
</dbReference>
<dbReference type="RefSeq" id="NP_791948.1">
    <property type="nucleotide sequence ID" value="NC_004578.1"/>
</dbReference>
<dbReference type="RefSeq" id="WP_011103861.1">
    <property type="nucleotide sequence ID" value="NC_004578.1"/>
</dbReference>
<dbReference type="SMR" id="Q884G7"/>
<dbReference type="STRING" id="223283.PSPTO_2126"/>
<dbReference type="GeneID" id="1183773"/>
<dbReference type="KEGG" id="pst:PSPTO_2126"/>
<dbReference type="PATRIC" id="fig|223283.9.peg.2157"/>
<dbReference type="eggNOG" id="COG0042">
    <property type="taxonomic scope" value="Bacteria"/>
</dbReference>
<dbReference type="HOGENOM" id="CLU_013299_2_1_6"/>
<dbReference type="OrthoDB" id="9783413at2"/>
<dbReference type="PhylomeDB" id="Q884G7"/>
<dbReference type="Proteomes" id="UP000002515">
    <property type="component" value="Chromosome"/>
</dbReference>
<dbReference type="GO" id="GO:0050660">
    <property type="term" value="F:flavin adenine dinucleotide binding"/>
    <property type="evidence" value="ECO:0007669"/>
    <property type="project" value="InterPro"/>
</dbReference>
<dbReference type="GO" id="GO:0010181">
    <property type="term" value="F:FMN binding"/>
    <property type="evidence" value="ECO:0007669"/>
    <property type="project" value="UniProtKB-UniRule"/>
</dbReference>
<dbReference type="GO" id="GO:0000049">
    <property type="term" value="F:tRNA binding"/>
    <property type="evidence" value="ECO:0007669"/>
    <property type="project" value="UniProtKB-UniRule"/>
</dbReference>
<dbReference type="GO" id="GO:0102264">
    <property type="term" value="F:tRNA-dihydrouridine20 synthase activity"/>
    <property type="evidence" value="ECO:0007669"/>
    <property type="project" value="UniProtKB-EC"/>
</dbReference>
<dbReference type="GO" id="GO:0102266">
    <property type="term" value="F:tRNA-dihydrouridine20a synthase activity"/>
    <property type="evidence" value="ECO:0007669"/>
    <property type="project" value="RHEA"/>
</dbReference>
<dbReference type="CDD" id="cd02801">
    <property type="entry name" value="DUS_like_FMN"/>
    <property type="match status" value="1"/>
</dbReference>
<dbReference type="FunFam" id="3.20.20.70:FF:000083">
    <property type="entry name" value="tRNA-dihydrouridine(20/20a) synthase"/>
    <property type="match status" value="1"/>
</dbReference>
<dbReference type="Gene3D" id="1.20.120.1460">
    <property type="match status" value="1"/>
</dbReference>
<dbReference type="Gene3D" id="3.20.20.70">
    <property type="entry name" value="Aldolase class I"/>
    <property type="match status" value="1"/>
</dbReference>
<dbReference type="HAMAP" id="MF_02041">
    <property type="entry name" value="DusA_subfam"/>
    <property type="match status" value="1"/>
</dbReference>
<dbReference type="InterPro" id="IPR013785">
    <property type="entry name" value="Aldolase_TIM"/>
</dbReference>
<dbReference type="InterPro" id="IPR035587">
    <property type="entry name" value="DUS-like_FMN-bd"/>
</dbReference>
<dbReference type="InterPro" id="IPR001269">
    <property type="entry name" value="DUS_fam"/>
</dbReference>
<dbReference type="InterPro" id="IPR004653">
    <property type="entry name" value="DusA"/>
</dbReference>
<dbReference type="InterPro" id="IPR018517">
    <property type="entry name" value="tRNA_hU_synthase_CS"/>
</dbReference>
<dbReference type="NCBIfam" id="NF008774">
    <property type="entry name" value="PRK11815.1"/>
    <property type="match status" value="1"/>
</dbReference>
<dbReference type="NCBIfam" id="TIGR00742">
    <property type="entry name" value="yjbN"/>
    <property type="match status" value="1"/>
</dbReference>
<dbReference type="PANTHER" id="PTHR42907">
    <property type="entry name" value="FMN-LINKED OXIDOREDUCTASES SUPERFAMILY PROTEIN"/>
    <property type="match status" value="1"/>
</dbReference>
<dbReference type="PANTHER" id="PTHR42907:SF1">
    <property type="entry name" value="FMN-LINKED OXIDOREDUCTASES SUPERFAMILY PROTEIN"/>
    <property type="match status" value="1"/>
</dbReference>
<dbReference type="Pfam" id="PF01207">
    <property type="entry name" value="Dus"/>
    <property type="match status" value="1"/>
</dbReference>
<dbReference type="PIRSF" id="PIRSF006621">
    <property type="entry name" value="Dus"/>
    <property type="match status" value="1"/>
</dbReference>
<dbReference type="SUPFAM" id="SSF51395">
    <property type="entry name" value="FMN-linked oxidoreductases"/>
    <property type="match status" value="1"/>
</dbReference>
<dbReference type="PROSITE" id="PS01136">
    <property type="entry name" value="UPF0034"/>
    <property type="match status" value="1"/>
</dbReference>
<gene>
    <name evidence="1" type="primary">dusA</name>
    <name type="ordered locus">PSPTO_2126</name>
</gene>
<accession>Q884G7</accession>
<sequence>MQPDIAPNPHSTRPGLSRRFSVAPMMDWTDHHCRYFMRLLSSQALLYTEMVTTGALLHGDRERFLRHDETEHPLALQLGGSTAAGLAACARLAEAAGYDEVNLNVGCPSDRVQNNMIGACLMAHPQLVADCVKAMRDAVGIPVTVKHRIGINGRDSYAELCDFVGTVHDAGCQSFTVHARIAILEGLSPKENRDIPPLRYDVVAQLKTDFPELEIVLNGGIKTLEQCSEHLQTFDGVMLGREAYHNPYLLAQVDQQLFGSVAPVISRHAALESMRPYIAAHIASGGNMHHVTRHMLGLGLGFPGARRFRQLLSVDIHKAENPLLLLDQAAKFLEGH</sequence>
<organism>
    <name type="scientific">Pseudomonas syringae pv. tomato (strain ATCC BAA-871 / DC3000)</name>
    <dbReference type="NCBI Taxonomy" id="223283"/>
    <lineage>
        <taxon>Bacteria</taxon>
        <taxon>Pseudomonadati</taxon>
        <taxon>Pseudomonadota</taxon>
        <taxon>Gammaproteobacteria</taxon>
        <taxon>Pseudomonadales</taxon>
        <taxon>Pseudomonadaceae</taxon>
        <taxon>Pseudomonas</taxon>
    </lineage>
</organism>